<protein>
    <recommendedName>
        <fullName evidence="1">Protein Nef</fullName>
    </recommendedName>
    <alternativeName>
        <fullName evidence="1">3'ORF</fullName>
    </alternativeName>
    <alternativeName>
        <fullName evidence="1">Negative factor</fullName>
        <shortName evidence="1">F-protein</shortName>
    </alternativeName>
    <component>
        <recommendedName>
            <fullName evidence="1">C-terminal core protein</fullName>
        </recommendedName>
    </component>
</protein>
<gene>
    <name evidence="1" type="primary">nef</name>
</gene>
<organism>
    <name type="scientific">Human immunodeficiency virus type 1 group M subtype D (isolate NDK)</name>
    <name type="common">HIV-1</name>
    <dbReference type="NCBI Taxonomy" id="11695"/>
    <lineage>
        <taxon>Viruses</taxon>
        <taxon>Riboviria</taxon>
        <taxon>Pararnavirae</taxon>
        <taxon>Artverviricota</taxon>
        <taxon>Revtraviricetes</taxon>
        <taxon>Ortervirales</taxon>
        <taxon>Retroviridae</taxon>
        <taxon>Orthoretrovirinae</taxon>
        <taxon>Lentivirus</taxon>
        <taxon>Human immunodeficiency virus type 1</taxon>
    </lineage>
</organism>
<name>NEF_HV1ND</name>
<sequence>MGGKWSKSSLVGWPAIRERIRKTDPAADGVGAVSRDLEKHGAITSSNTASTNDTCAWLEAQEESEEVGFPVRPQVPLRPMTYKEAVDLSHFLKEKGGLEGLIWSKKRQEILDLWVYNTQGIFPDWQNYTPGPGIRYPLTFGWCFQLVPVDPQEVEEATEREDNCLLHPMCQQGMEDPERQVLMWRFNSRLALEHKARELHPEFYKDC</sequence>
<reference key="1">
    <citation type="journal article" date="1989" name="Gene">
        <title>Nucleotide sequence of HIV1-NDK: a highly cytopathic strain of the human immunodeficiency virus.</title>
        <authorList>
            <person name="Spire B."/>
            <person name="Sire J."/>
            <person name="Zachar V."/>
            <person name="Rey F."/>
            <person name="Barre-Sinoussi F."/>
            <person name="Galibert F."/>
            <person name="Hampe A."/>
            <person name="Chermann J.C."/>
        </authorList>
    </citation>
    <scope>NUCLEOTIDE SEQUENCE [GENOMIC DNA]</scope>
</reference>
<accession>P18801</accession>
<organismHost>
    <name type="scientific">Homo sapiens</name>
    <name type="common">Human</name>
    <dbReference type="NCBI Taxonomy" id="9606"/>
</organismHost>
<comment type="function">
    <text evidence="1">Factor of infectivity and pathogenicity, required for optimal virus replication. Alters numerous pathways of T-lymphocyte function and down-regulates immunity surface molecules in order to evade host defense and increase viral infectivity. Alters the functionality of other immunity cells, like dendritic cells, monocytes/macrophages and NK cells.</text>
</comment>
<comment type="function">
    <text evidence="1">In infected CD4(+) T-lymphocytes, down-regulates the surface MHC-I, mature MHC-II, CD4, CD28, CCR5 and CXCR4 molecules. Mediates internalization and degradation of host CD4 through the interaction of with the cytoplasmic tail of CD4, the recruitment of AP-2 (clathrin adapter protein complex 2), internalization through clathrin coated pits, and subsequent transport to endosomes and lysosomes for degradation. Diverts host MHC-I molecules to the trans-Golgi network-associated endosomal compartments by an endocytic pathway to finally target them for degradation. MHC-I down-regulation may involve AP-1 (clathrin adapter protein complex 1) or possibly Src family kinase-ZAP70/Syk-PI3K cascade recruited by PACS2. In consequence infected cells are masked for immune recognition by cytotoxic T-lymphocytes. Decreasing the number of immune receptors also prevents reinfection by more HIV particles (superinfection). Down-regulates host SERINC3 and SERINC5 thereby excluding these proteins from the viral particles. Virion infectivity is drastically higher when SERINC3 or SERINC5 are excluded from the viral envelope, because these host antiviral proteins impair the membrane fusion event necessary for subsequent virion penetration.</text>
</comment>
<comment type="function">
    <text evidence="1">Bypasses host T-cell signaling by inducing a transcriptional program nearly identical to that of anti-CD3 cell activation. Interaction with TCR-zeta chain up-regulates the Fas ligand (FasL). Increasing surface FasL molecules and decreasing surface MHC-I molecules on infected CD4(+) cells send attacking cytotoxic CD8+ T-lymphocytes into apoptosis.</text>
</comment>
<comment type="function">
    <text evidence="1">Plays a role in optimizing the host cell environment for viral replication without causing cell death by apoptosis. Protects the infected cells from apoptosis in order to keep them alive until the next virus generation is ready to strike. Inhibits the Fas and TNFR-mediated death signals by blocking MAP3K5/ASK1. Decreases the half-life of TP53, protecting the infected cell against p53-mediated apoptosis. Inhibits the apoptotic signals regulated by the Bcl-2 family proteins through the formation of a Nef/PI3-kinase/PAK2 complex that leads to activation of PAK2 and induces phosphorylation of host BAD.</text>
</comment>
<comment type="function">
    <text evidence="1">Extracellular Nef protein targets CD4(+) T-lymphocytes for apoptosis by interacting with CXCR4 surface receptors.</text>
</comment>
<comment type="subunit">
    <text evidence="1">Monomer; cytosolic form. Homodimer; membrane bound form. Interacts with Nef associated p21-activated kinase (PAK2); this interaction activates PAK2. Associates with the Nef-MHC-I-AP1 complex; this complex is required for MHC-I internalization. Interacts (via C-terminus) with host PI3-kinase. Interacts with host PACS1; this interaction seems to be weak. Interacts with host PACS2. Interacts with host LCK and MAPK3; these interactions inhibit the kinase activity of the latter. Interacts with host ATP6V1H; this interaction may play a role in CD4 endocytosis. Associates with the CD4-Nef-AP2 complex; this complex is required for CD4 internalization. Interacts with host AP2 subunit alpha and AP2 subunit sigma2. Interacts with TCR-zeta chain; this interaction up-regulates the Fas ligand (FasL) surface expression. Interacts with host HCK, LYN, and SRC; these interactions activate the Src family kinases. Interacts with MAP3K5; this interaction inhibits the Fas and TNFR-mediated death signals. Interacts with beta-COP and PTE1. Interacts with human RACK1; this increases Nef phosphorylation by PKC. Interacts with TP53; this interaction decreases the half-life of TP53, protecting the infected cell against p53-mediated apoptosis.</text>
</comment>
<comment type="subcellular location">
    <subcellularLocation>
        <location evidence="1">Host cell membrane</location>
        <topology evidence="1">Lipid-anchor</topology>
        <orientation evidence="1">Cytoplasmic side</orientation>
    </subcellularLocation>
    <subcellularLocation>
        <location evidence="1">Virion</location>
    </subcellularLocation>
    <subcellularLocation>
        <location evidence="1">Secreted</location>
    </subcellularLocation>
    <subcellularLocation>
        <location evidence="1">Host Golgi apparatus membrane</location>
    </subcellularLocation>
    <text evidence="1">TGN localization requires PACS1. Associates with the inner plasma membrane through its N-terminal domain. Nef stimulates its own export via the release of exosomes. Incorporated in virions at a rate of about 10 molecules per virion, where it is cleaved.</text>
</comment>
<comment type="induction">
    <text evidence="1">Expressed early in the viral replication cycle.</text>
</comment>
<comment type="domain">
    <text evidence="1">The N-terminal domain is composed of the N-myristoyl glycine and of a cluster of positively charged amino acids. It is required for inner plasma membrane targeting of Nef and virion incorporation, and thereby for infectivity. This domain is also involved in binding to TP53.</text>
</comment>
<comment type="domain">
    <text evidence="1">The SH3-binding domain constituted of PxxP motifs mediates binding to several Src family proteins thereby regulating their tyrosine kinase activity. The same motifs also mediates the association with MAPK3, PI3-kinase and TCR-zeta.</text>
</comment>
<comment type="domain">
    <text evidence="1">The dileucine internalization motif and a diacidic motif seem to be required for binding to AP-2.</text>
</comment>
<comment type="domain">
    <text evidence="1">The acidic region binds to the sorting protein PACS-2, which targets Nef to the paranuclear region, enabling the PxxP motif to direct assembly of an SFK/ZAP-70/PI3K complex that accelerates endocytosis of cell-surface MHC-I.</text>
</comment>
<comment type="PTM">
    <text evidence="1">The virion-associated Nef proteins are cleaved by the viral protease to release the soluble C-terminal core protein. Nef is probably cleaved concomitantly with viral structural proteins on maturation of virus particles.</text>
</comment>
<comment type="PTM">
    <text evidence="1">Myristoylated.</text>
</comment>
<comment type="PTM">
    <text evidence="1">Phosphorylated on serine residues, probably by host PKCdelta and theta.</text>
</comment>
<comment type="miscellaneous">
    <text evidence="1">HIV-1 lineages are divided in three main groups, M (for Major), O (for Outlier), and N (for New, or Non-M, Non-O). The vast majority of strains found worldwide belong to the group M. Group O seems to be endemic to and largely confined to Cameroon and neighboring countries in West Central Africa, where these viruses represent a small minority of HIV-1 strains. The group N is represented by a limited number of isolates from Cameroonian persons. The group M is further subdivided in 9 clades or subtypes (A to D, F to H, J and K).</text>
</comment>
<comment type="similarity">
    <text evidence="1">Belongs to the lentivirus primate group Nef protein family.</text>
</comment>
<keyword id="KW-0014">AIDS</keyword>
<keyword id="KW-0053">Apoptosis</keyword>
<keyword id="KW-0244">Early protein</keyword>
<keyword id="KW-1032">Host cell membrane</keyword>
<keyword id="KW-1040">Host Golgi apparatus</keyword>
<keyword id="KW-1043">Host membrane</keyword>
<keyword id="KW-0945">Host-virus interaction</keyword>
<keyword id="KW-1080">Inhibition of host adaptive immune response by virus</keyword>
<keyword id="KW-1083">Inhibition of host autophagy by virus</keyword>
<keyword id="KW-1115">Inhibition of host MHC class I molecule presentation by virus</keyword>
<keyword id="KW-1116">Inhibition of host MHC class II molecule presentation by virus</keyword>
<keyword id="KW-0449">Lipoprotein</keyword>
<keyword id="KW-0472">Membrane</keyword>
<keyword id="KW-0519">Myristate</keyword>
<keyword id="KW-0597">Phosphoprotein</keyword>
<keyword id="KW-0964">Secreted</keyword>
<keyword id="KW-0729">SH3-binding</keyword>
<keyword id="KW-0899">Viral immunoevasion</keyword>
<keyword id="KW-0946">Virion</keyword>
<keyword id="KW-0843">Virulence</keyword>
<evidence type="ECO:0000255" key="1">
    <source>
        <dbReference type="HAMAP-Rule" id="MF_04078"/>
    </source>
</evidence>
<feature type="initiator methionine" description="Removed; by host" evidence="1">
    <location>
        <position position="1"/>
    </location>
</feature>
<feature type="chain" id="PRO_0000038349" description="Protein Nef" evidence="1">
    <location>
        <begin position="2"/>
        <end position="207"/>
    </location>
</feature>
<feature type="chain" id="PRO_0000038350" description="C-terminal core protein" evidence="1">
    <location>
        <begin position="58"/>
        <end position="207"/>
    </location>
</feature>
<feature type="region of interest" description="Acidic; interacts with host PACS1 and PACS2; stabilizes the interaction of NEF/MHC-I with host AP1M1; necessary for MHC-I internalization" evidence="1">
    <location>
        <begin position="62"/>
        <end position="66"/>
    </location>
</feature>
<feature type="region of interest" description="SH3-binding; interaction with Src family tyrosine kinases" evidence="1">
    <location>
        <begin position="70"/>
        <end position="79"/>
    </location>
</feature>
<feature type="region of interest" description="Mediates dimerization, Nef-PTE1 interaction" evidence="1">
    <location>
        <begin position="109"/>
        <end position="125"/>
    </location>
</feature>
<feature type="region of interest" description="Binding to ATP6V1H" evidence="1">
    <location>
        <begin position="149"/>
        <end position="181"/>
    </location>
</feature>
<feature type="short sequence motif" description="PxxP; stabilizes the interaction of NEF/MHC-I with host AP1M1; necessary for MHC-I internalization" evidence="1">
    <location>
        <begin position="73"/>
        <end position="76"/>
    </location>
</feature>
<feature type="short sequence motif" description="Dileucine internalization motif; necessary for CD4 internalization" evidence="1">
    <location>
        <begin position="165"/>
        <end position="166"/>
    </location>
</feature>
<feature type="short sequence motif" description="Diacidic; necessary for CD4 internalization" evidence="1">
    <location>
        <begin position="175"/>
        <end position="176"/>
    </location>
</feature>
<feature type="site" description="Cleavage; by viral protease" evidence="1">
    <location>
        <begin position="57"/>
        <end position="58"/>
    </location>
</feature>
<feature type="modified residue" description="Phosphoserine; by host" evidence="1">
    <location>
        <position position="6"/>
    </location>
</feature>
<feature type="lipid moiety-binding region" description="N-myristoyl glycine; by host" evidence="1">
    <location>
        <position position="2"/>
    </location>
</feature>
<proteinExistence type="inferred from homology"/>
<dbReference type="EMBL" id="M27323">
    <property type="protein sequence ID" value="AAA44874.1"/>
    <property type="molecule type" value="Genomic_DNA"/>
</dbReference>
<dbReference type="PIR" id="JQ0068">
    <property type="entry name" value="QQLJND"/>
</dbReference>
<dbReference type="SMR" id="P18801"/>
<dbReference type="Proteomes" id="UP000172620">
    <property type="component" value="Segment"/>
</dbReference>
<dbReference type="GO" id="GO:0005576">
    <property type="term" value="C:extracellular region"/>
    <property type="evidence" value="ECO:0007669"/>
    <property type="project" value="UniProtKB-SubCell"/>
</dbReference>
<dbReference type="GO" id="GO:0044178">
    <property type="term" value="C:host cell Golgi membrane"/>
    <property type="evidence" value="ECO:0007669"/>
    <property type="project" value="UniProtKB-SubCell"/>
</dbReference>
<dbReference type="GO" id="GO:0020002">
    <property type="term" value="C:host cell plasma membrane"/>
    <property type="evidence" value="ECO:0007669"/>
    <property type="project" value="UniProtKB-SubCell"/>
</dbReference>
<dbReference type="GO" id="GO:0016020">
    <property type="term" value="C:membrane"/>
    <property type="evidence" value="ECO:0007669"/>
    <property type="project" value="UniProtKB-UniRule"/>
</dbReference>
<dbReference type="GO" id="GO:0044423">
    <property type="term" value="C:virion component"/>
    <property type="evidence" value="ECO:0007669"/>
    <property type="project" value="UniProtKB-UniRule"/>
</dbReference>
<dbReference type="GO" id="GO:0005525">
    <property type="term" value="F:GTP binding"/>
    <property type="evidence" value="ECO:0007669"/>
    <property type="project" value="UniProtKB-UniRule"/>
</dbReference>
<dbReference type="GO" id="GO:0017124">
    <property type="term" value="F:SH3 domain binding"/>
    <property type="evidence" value="ECO:0007669"/>
    <property type="project" value="UniProtKB-UniRule"/>
</dbReference>
<dbReference type="GO" id="GO:0046776">
    <property type="term" value="P:symbiont-mediated suppression of host antigen processing and presentation of peptide antigen via MHC class I"/>
    <property type="evidence" value="ECO:0007669"/>
    <property type="project" value="UniProtKB-UniRule"/>
</dbReference>
<dbReference type="GO" id="GO:0039505">
    <property type="term" value="P:symbiont-mediated suppression of host antigen processing and presentation of peptide antigen via MHC class II"/>
    <property type="evidence" value="ECO:0007669"/>
    <property type="project" value="UniProtKB-UniRule"/>
</dbReference>
<dbReference type="GO" id="GO:0140321">
    <property type="term" value="P:symbiont-mediated suppression of host autophagy"/>
    <property type="evidence" value="ECO:0007669"/>
    <property type="project" value="UniProtKB-KW"/>
</dbReference>
<dbReference type="FunFam" id="4.10.890.10:FF:000001">
    <property type="entry name" value="Protein Nef"/>
    <property type="match status" value="1"/>
</dbReference>
<dbReference type="Gene3D" id="4.10.890.10">
    <property type="entry name" value="HIV 1 nef anchor domain"/>
    <property type="match status" value="1"/>
</dbReference>
<dbReference type="Gene3D" id="3.30.62.10">
    <property type="entry name" value="Nef Regulatory Factor"/>
    <property type="match status" value="1"/>
</dbReference>
<dbReference type="HAMAP" id="MF_04078">
    <property type="entry name" value="NEF_HIV"/>
    <property type="match status" value="1"/>
</dbReference>
<dbReference type="InterPro" id="IPR027480">
    <property type="entry name" value="HIV-1_Nef_anchor_sf"/>
</dbReference>
<dbReference type="InterPro" id="IPR027481">
    <property type="entry name" value="HIV-1_Nef_core_sf"/>
</dbReference>
<dbReference type="InterPro" id="IPR001558">
    <property type="entry name" value="HIV_Nef"/>
</dbReference>
<dbReference type="Pfam" id="PF00469">
    <property type="entry name" value="F-protein"/>
    <property type="match status" value="1"/>
</dbReference>
<dbReference type="SUPFAM" id="SSF55671">
    <property type="entry name" value="Regulatory factor Nef"/>
    <property type="match status" value="1"/>
</dbReference>